<evidence type="ECO:0000255" key="1">
    <source>
        <dbReference type="PROSITE-ProRule" id="PRU00625"/>
    </source>
</evidence>
<comment type="function">
    <text>Possible transcription activator.</text>
</comment>
<comment type="subcellular location">
    <subcellularLocation>
        <location evidence="1">Nucleus</location>
    </subcellularLocation>
</comment>
<comment type="developmental stage">
    <text>High rates of growth.</text>
</comment>
<accession>P80074</accession>
<sequence length="449" mass="50204">LGNRWSAIAIPRRTDNEIKNYWNTHLKKRLMQMGIDPVTHKSTAAEELVHYSIIPGLRPVVSTNLTHMSQWDSARAEAEARLSRQSSLTSPASDLAQTSLEHQKSNLSTKNDVNNQVASSNFMSSWKAQVTETLRPNFGVVELDKPPASPVNLQKFLQEWESSLKAPQPEMEGPSIHDSITNIPSLSSGTASELVSTQYSPDVSSASYRMPVSSMILPSPAQISERLMASRHCDSLLPLPRIDLAGSNIFPAQSPSATESSFSFSGLCKVDNEHQYSPTSILHGPSGHDSSYSSPCGSSSSAYDSVDILAQTFSLVHNDNHQHSRATLAMNFSQEPSFWTQQQVALVDALQPESYFTHELGVNIAQKPPSHSFNLSVNSMVNQVGVPNNIPFHSLIICVESIFVAYFRRSRCTSIANLHMFFVFRFYFYLFYFSFDFYRVPLRRRKSQW</sequence>
<reference key="1">
    <citation type="journal article" date="1993" name="Plant J.">
        <title>Expression of myb-related genes in the moss, Physcomitrella patens.</title>
        <authorList>
            <person name="Leech M.J."/>
            <person name="Kammerer W."/>
            <person name="Cove D.J."/>
            <person name="Martin C."/>
            <person name="Wang T.L."/>
        </authorList>
    </citation>
    <scope>NUCLEOTIDE SEQUENCE [MRNA]</scope>
</reference>
<feature type="chain" id="PRO_0000197069" description="Myb-related protein Pp1">
    <location>
        <begin position="1" status="less than"/>
        <end position="449"/>
    </location>
</feature>
<feature type="domain" description="HTH myb-type" evidence="1">
    <location>
        <begin position="1" status="less than"/>
        <end position="30"/>
    </location>
</feature>
<feature type="DNA-binding region" description="H-T-H motif" evidence="1">
    <location>
        <begin position="5"/>
        <end position="26"/>
    </location>
</feature>
<feature type="non-terminal residue">
    <location>
        <position position="1"/>
    </location>
</feature>
<gene>
    <name type="primary">PP1</name>
</gene>
<proteinExistence type="evidence at transcript level"/>
<organism>
    <name type="scientific">Physcomitrium patens</name>
    <name type="common">Spreading-leaved earth moss</name>
    <name type="synonym">Physcomitrella patens</name>
    <dbReference type="NCBI Taxonomy" id="3218"/>
    <lineage>
        <taxon>Eukaryota</taxon>
        <taxon>Viridiplantae</taxon>
        <taxon>Streptophyta</taxon>
        <taxon>Embryophyta</taxon>
        <taxon>Bryophyta</taxon>
        <taxon>Bryophytina</taxon>
        <taxon>Bryopsida</taxon>
        <taxon>Funariidae</taxon>
        <taxon>Funariales</taxon>
        <taxon>Funariaceae</taxon>
        <taxon>Physcomitrium</taxon>
    </lineage>
</organism>
<keyword id="KW-0010">Activator</keyword>
<keyword id="KW-0238">DNA-binding</keyword>
<keyword id="KW-0539">Nucleus</keyword>
<keyword id="KW-1185">Reference proteome</keyword>
<keyword id="KW-0677">Repeat</keyword>
<keyword id="KW-0804">Transcription</keyword>
<keyword id="KW-0805">Transcription regulation</keyword>
<protein>
    <recommendedName>
        <fullName>Myb-related protein Pp1</fullName>
    </recommendedName>
</protein>
<dbReference type="EMBL" id="X67051">
    <property type="protein sequence ID" value="CAB37924.1"/>
    <property type="molecule type" value="mRNA"/>
</dbReference>
<dbReference type="SMR" id="P80074"/>
<dbReference type="FunCoup" id="P80074">
    <property type="interactions" value="2"/>
</dbReference>
<dbReference type="PaxDb" id="3218-PP1S389_40V6.1"/>
<dbReference type="eggNOG" id="KOG0048">
    <property type="taxonomic scope" value="Eukaryota"/>
</dbReference>
<dbReference type="InParanoid" id="P80074"/>
<dbReference type="Proteomes" id="UP000006727">
    <property type="component" value="Unplaced"/>
</dbReference>
<dbReference type="GO" id="GO:0005634">
    <property type="term" value="C:nucleus"/>
    <property type="evidence" value="ECO:0007669"/>
    <property type="project" value="UniProtKB-SubCell"/>
</dbReference>
<dbReference type="GO" id="GO:0003677">
    <property type="term" value="F:DNA binding"/>
    <property type="evidence" value="ECO:0007669"/>
    <property type="project" value="UniProtKB-KW"/>
</dbReference>
<dbReference type="CDD" id="cd00167">
    <property type="entry name" value="SANT"/>
    <property type="match status" value="1"/>
</dbReference>
<dbReference type="Gene3D" id="1.10.10.60">
    <property type="entry name" value="Homeodomain-like"/>
    <property type="match status" value="1"/>
</dbReference>
<dbReference type="InterPro" id="IPR009057">
    <property type="entry name" value="Homeodomain-like_sf"/>
</dbReference>
<dbReference type="InterPro" id="IPR017930">
    <property type="entry name" value="Myb_dom"/>
</dbReference>
<dbReference type="InterPro" id="IPR015495">
    <property type="entry name" value="Myb_TF_plants"/>
</dbReference>
<dbReference type="InterPro" id="IPR001005">
    <property type="entry name" value="SANT/Myb"/>
</dbReference>
<dbReference type="PANTHER" id="PTHR47994">
    <property type="entry name" value="F14D16.11-RELATED"/>
    <property type="match status" value="1"/>
</dbReference>
<dbReference type="PANTHER" id="PTHR47994:SF5">
    <property type="entry name" value="F14D16.11-RELATED"/>
    <property type="match status" value="1"/>
</dbReference>
<dbReference type="Pfam" id="PF00249">
    <property type="entry name" value="Myb_DNA-binding"/>
    <property type="match status" value="1"/>
</dbReference>
<dbReference type="SUPFAM" id="SSF46689">
    <property type="entry name" value="Homeodomain-like"/>
    <property type="match status" value="1"/>
</dbReference>
<dbReference type="PROSITE" id="PS51294">
    <property type="entry name" value="HTH_MYB"/>
    <property type="match status" value="1"/>
</dbReference>
<name>MYB1_PHYPA</name>